<gene>
    <name type="primary">rps3</name>
</gene>
<reference key="1">
    <citation type="submission" date="2007-03" db="EMBL/GenBank/DDBJ databases">
        <title>Sequencing analysis of Nasturtium officinale chloroplast DNA.</title>
        <authorList>
            <person name="Hosouchi T."/>
            <person name="Tsuruoka H."/>
            <person name="Kotani H."/>
        </authorList>
    </citation>
    <scope>NUCLEOTIDE SEQUENCE [LARGE SCALE GENOMIC DNA]</scope>
</reference>
<organism>
    <name type="scientific">Nasturtium officinale</name>
    <name type="common">Watercress</name>
    <name type="synonym">Rorippa nasturtium-aquaticum</name>
    <dbReference type="NCBI Taxonomy" id="65948"/>
    <lineage>
        <taxon>Eukaryota</taxon>
        <taxon>Viridiplantae</taxon>
        <taxon>Streptophyta</taxon>
        <taxon>Embryophyta</taxon>
        <taxon>Tracheophyta</taxon>
        <taxon>Spermatophyta</taxon>
        <taxon>Magnoliopsida</taxon>
        <taxon>eudicotyledons</taxon>
        <taxon>Gunneridae</taxon>
        <taxon>Pentapetalae</taxon>
        <taxon>rosids</taxon>
        <taxon>malvids</taxon>
        <taxon>Brassicales</taxon>
        <taxon>Brassicaceae</taxon>
        <taxon>Cardamineae</taxon>
        <taxon>Nasturtium</taxon>
    </lineage>
</organism>
<accession>A4QLX1</accession>
<geneLocation type="chloroplast"/>
<protein>
    <recommendedName>
        <fullName evidence="2">Small ribosomal subunit protein uS3c</fullName>
    </recommendedName>
    <alternativeName>
        <fullName>30S ribosomal protein S3, chloroplastic</fullName>
    </alternativeName>
</protein>
<sequence length="218" mass="25188">MGQKINPLGFRLGTTQSHHSLWFAQPKKYSEGLEEDKKIRDCIKNYVQKNIRISSGMEGIARIEIQKRIDLIQIIIYMGFPKLLIEDKPRRVEELQMNVQKELNCVNRKLNIAITRISNPYGDPNILAEFIAGQLKNRVSFRKAMKKAIELTEQANTKGIQVQIAGRIDGKEIARVEWIREGRVPLQTIEAKIDYCSYTVRTIYGVLGIKIWIFVDEE</sequence>
<evidence type="ECO:0000250" key="1"/>
<evidence type="ECO:0000305" key="2"/>
<proteinExistence type="inferred from homology"/>
<name>RR3_NASOF</name>
<comment type="subunit">
    <text evidence="1">Part of the 30S ribosomal subunit.</text>
</comment>
<comment type="subcellular location">
    <subcellularLocation>
        <location>Plastid</location>
        <location>Chloroplast</location>
    </subcellularLocation>
</comment>
<comment type="similarity">
    <text evidence="2">Belongs to the universal ribosomal protein uS3 family.</text>
</comment>
<dbReference type="EMBL" id="AP009376">
    <property type="protein sequence ID" value="BAF50676.1"/>
    <property type="molecule type" value="Genomic_DNA"/>
</dbReference>
<dbReference type="RefSeq" id="YP_001123852.1">
    <property type="nucleotide sequence ID" value="NC_009275.1"/>
</dbReference>
<dbReference type="SMR" id="A4QLX1"/>
<dbReference type="GeneID" id="4962087"/>
<dbReference type="GO" id="GO:0009507">
    <property type="term" value="C:chloroplast"/>
    <property type="evidence" value="ECO:0007669"/>
    <property type="project" value="UniProtKB-SubCell"/>
</dbReference>
<dbReference type="GO" id="GO:0022627">
    <property type="term" value="C:cytosolic small ribosomal subunit"/>
    <property type="evidence" value="ECO:0007669"/>
    <property type="project" value="TreeGrafter"/>
</dbReference>
<dbReference type="GO" id="GO:0019843">
    <property type="term" value="F:rRNA binding"/>
    <property type="evidence" value="ECO:0007669"/>
    <property type="project" value="UniProtKB-UniRule"/>
</dbReference>
<dbReference type="GO" id="GO:0003735">
    <property type="term" value="F:structural constituent of ribosome"/>
    <property type="evidence" value="ECO:0007669"/>
    <property type="project" value="InterPro"/>
</dbReference>
<dbReference type="GO" id="GO:0006412">
    <property type="term" value="P:translation"/>
    <property type="evidence" value="ECO:0007669"/>
    <property type="project" value="UniProtKB-UniRule"/>
</dbReference>
<dbReference type="CDD" id="cd02412">
    <property type="entry name" value="KH-II_30S_S3"/>
    <property type="match status" value="1"/>
</dbReference>
<dbReference type="FunFam" id="3.30.1140.32:FF:000003">
    <property type="entry name" value="30S ribosomal protein S3, chloroplastic"/>
    <property type="match status" value="1"/>
</dbReference>
<dbReference type="FunFam" id="3.30.300.20:FF:000008">
    <property type="entry name" value="30S ribosomal protein S3, chloroplastic"/>
    <property type="match status" value="1"/>
</dbReference>
<dbReference type="Gene3D" id="3.30.300.20">
    <property type="match status" value="1"/>
</dbReference>
<dbReference type="Gene3D" id="3.30.1140.32">
    <property type="entry name" value="Ribosomal protein S3, C-terminal domain"/>
    <property type="match status" value="1"/>
</dbReference>
<dbReference type="HAMAP" id="MF_01309_B">
    <property type="entry name" value="Ribosomal_uS3_B"/>
    <property type="match status" value="1"/>
</dbReference>
<dbReference type="InterPro" id="IPR015946">
    <property type="entry name" value="KH_dom-like_a/b"/>
</dbReference>
<dbReference type="InterPro" id="IPR004044">
    <property type="entry name" value="KH_dom_type_2"/>
</dbReference>
<dbReference type="InterPro" id="IPR009019">
    <property type="entry name" value="KH_sf_prok-type"/>
</dbReference>
<dbReference type="InterPro" id="IPR036419">
    <property type="entry name" value="Ribosomal_S3_C_sf"/>
</dbReference>
<dbReference type="InterPro" id="IPR005704">
    <property type="entry name" value="Ribosomal_uS3_bac-typ"/>
</dbReference>
<dbReference type="InterPro" id="IPR001351">
    <property type="entry name" value="Ribosomal_uS3_C"/>
</dbReference>
<dbReference type="InterPro" id="IPR018280">
    <property type="entry name" value="Ribosomal_uS3_CS"/>
</dbReference>
<dbReference type="NCBIfam" id="TIGR01009">
    <property type="entry name" value="rpsC_bact"/>
    <property type="match status" value="1"/>
</dbReference>
<dbReference type="PANTHER" id="PTHR11760">
    <property type="entry name" value="30S/40S RIBOSOMAL PROTEIN S3"/>
    <property type="match status" value="1"/>
</dbReference>
<dbReference type="PANTHER" id="PTHR11760:SF19">
    <property type="entry name" value="SMALL RIBOSOMAL SUBUNIT PROTEIN US3C"/>
    <property type="match status" value="1"/>
</dbReference>
<dbReference type="Pfam" id="PF00189">
    <property type="entry name" value="Ribosomal_S3_C"/>
    <property type="match status" value="1"/>
</dbReference>
<dbReference type="SUPFAM" id="SSF54814">
    <property type="entry name" value="Prokaryotic type KH domain (KH-domain type II)"/>
    <property type="match status" value="1"/>
</dbReference>
<dbReference type="SUPFAM" id="SSF54821">
    <property type="entry name" value="Ribosomal protein S3 C-terminal domain"/>
    <property type="match status" value="1"/>
</dbReference>
<dbReference type="PROSITE" id="PS50823">
    <property type="entry name" value="KH_TYPE_2"/>
    <property type="match status" value="1"/>
</dbReference>
<dbReference type="PROSITE" id="PS00548">
    <property type="entry name" value="RIBOSOMAL_S3"/>
    <property type="match status" value="1"/>
</dbReference>
<keyword id="KW-0150">Chloroplast</keyword>
<keyword id="KW-0934">Plastid</keyword>
<keyword id="KW-0687">Ribonucleoprotein</keyword>
<keyword id="KW-0689">Ribosomal protein</keyword>
<keyword id="KW-0694">RNA-binding</keyword>
<keyword id="KW-0699">rRNA-binding</keyword>
<feature type="chain" id="PRO_0000293949" description="Small ribosomal subunit protein uS3c">
    <location>
        <begin position="1"/>
        <end position="218"/>
    </location>
</feature>
<feature type="domain" description="KH type-2">
    <location>
        <begin position="47"/>
        <end position="118"/>
    </location>
</feature>